<keyword id="KW-1185">Reference proteome</keyword>
<proteinExistence type="predicted"/>
<name>VP29_BPAPS</name>
<dbReference type="EMBL" id="AF157835">
    <property type="protein sequence ID" value="AAF03972.1"/>
    <property type="molecule type" value="Genomic_DNA"/>
</dbReference>
<dbReference type="RefSeq" id="NP_050990.1">
    <property type="nucleotide sequence ID" value="NC_000935.1"/>
</dbReference>
<dbReference type="SMR" id="Q9T1R9"/>
<dbReference type="KEGG" id="vg:1262323"/>
<dbReference type="Proteomes" id="UP000000853">
    <property type="component" value="Genome"/>
</dbReference>
<sequence length="96" mass="11578">MRRRKRCHRAEIQRDKKADIYPVWIHLPNQLRQIVHPLFVTRCNAPDFDKHQSLHLNHIEGIYPLASLIMPSRYRHIYITLLYLQNKSPDYDSSET</sequence>
<reference key="1">
    <citation type="journal article" date="1999" name="Virology">
        <title>Isolation and characterization of APSE-1, a bacteriophage infecting the secondary endosymbiont of acyrthosiphon pisum.</title>
        <authorList>
            <person name="van der Wilk F."/>
            <person name="Dullemans A.M."/>
            <person name="Verbeek M."/>
            <person name="van den Heuvel J.F.J.M."/>
        </authorList>
    </citation>
    <scope>NUCLEOTIDE SEQUENCE [LARGE SCALE GENOMIC DNA]</scope>
</reference>
<gene>
    <name type="primary">29</name>
</gene>
<organism>
    <name type="scientific">Acyrthosiphon pisum secondary endosymbiont phage 1</name>
    <name type="common">Bacteriophage APSE-1</name>
    <dbReference type="NCBI Taxonomy" id="2682836"/>
    <lineage>
        <taxon>Viruses</taxon>
        <taxon>Duplodnaviria</taxon>
        <taxon>Heunggongvirae</taxon>
        <taxon>Uroviricota</taxon>
        <taxon>Caudoviricetes</taxon>
        <taxon>Sendosyvirus</taxon>
        <taxon>Sendosyvirus APSE1</taxon>
    </lineage>
</organism>
<accession>Q9T1R9</accession>
<feature type="chain" id="PRO_0000077866" description="Putative protein p29">
    <location>
        <begin position="1"/>
        <end position="96"/>
    </location>
</feature>
<organismHost>
    <name type="scientific">Escherichia coli</name>
    <dbReference type="NCBI Taxonomy" id="562"/>
</organismHost>
<protein>
    <recommendedName>
        <fullName>Putative protein p29</fullName>
    </recommendedName>
</protein>